<protein>
    <recommendedName>
        <fullName>Caveolin-1</fullName>
    </recommendedName>
</protein>
<organism>
    <name type="scientific">Atelerix albiventris</name>
    <name type="common">Middle-African hedgehog</name>
    <name type="synonym">Four-toed hedgehog</name>
    <dbReference type="NCBI Taxonomy" id="9368"/>
    <lineage>
        <taxon>Eukaryota</taxon>
        <taxon>Metazoa</taxon>
        <taxon>Chordata</taxon>
        <taxon>Craniata</taxon>
        <taxon>Vertebrata</taxon>
        <taxon>Euteleostomi</taxon>
        <taxon>Mammalia</taxon>
        <taxon>Eutheria</taxon>
        <taxon>Laurasiatheria</taxon>
        <taxon>Eulipotyphla</taxon>
        <taxon>Erinaceidae</taxon>
        <taxon>Erinaceinae</taxon>
        <taxon>Atelerix</taxon>
    </lineage>
</organism>
<feature type="initiator methionine" description="Removed" evidence="4">
    <location>
        <position position="1"/>
    </location>
</feature>
<feature type="chain" id="PRO_0000274178" description="Caveolin-1">
    <location>
        <begin position="2"/>
        <end position="178"/>
    </location>
</feature>
<feature type="topological domain" description="Cytoplasmic" evidence="6">
    <location>
        <begin position="2"/>
        <end position="104"/>
    </location>
</feature>
<feature type="intramembrane region" description="Helical" evidence="6">
    <location>
        <begin position="105"/>
        <end position="125"/>
    </location>
</feature>
<feature type="topological domain" description="Cytoplasmic" evidence="6">
    <location>
        <begin position="126"/>
        <end position="178"/>
    </location>
</feature>
<feature type="region of interest" description="Required for homooligomerization" evidence="4">
    <location>
        <begin position="2"/>
        <end position="94"/>
    </location>
</feature>
<feature type="region of interest" description="Interaction with CAVIN3" evidence="4">
    <location>
        <begin position="82"/>
        <end position="94"/>
    </location>
</feature>
<feature type="region of interest" description="Interacts with SPRY1, SPRY2, SPRY3 and SPRY4" evidence="3">
    <location>
        <begin position="131"/>
        <end position="142"/>
    </location>
</feature>
<feature type="region of interest" description="Interacts with SPRY1, SPRY2, and SPRY4" evidence="3">
    <location>
        <begin position="149"/>
        <end position="160"/>
    </location>
</feature>
<feature type="region of interest" description="Interacts with SPRY1, SPRY2, SPRY3 and SPRY4" evidence="3">
    <location>
        <begin position="167"/>
        <end position="178"/>
    </location>
</feature>
<feature type="modified residue" description="N-acetylserine" evidence="4">
    <location>
        <position position="2"/>
    </location>
</feature>
<feature type="modified residue" description="Phosphoserine" evidence="2">
    <location>
        <position position="2"/>
    </location>
</feature>
<feature type="modified residue" description="N6-acetyllysine; alternate" evidence="4">
    <location>
        <position position="5"/>
    </location>
</feature>
<feature type="modified residue" description="Phosphotyrosine" evidence="4">
    <location>
        <position position="6"/>
    </location>
</feature>
<feature type="modified residue" description="Phosphoserine" evidence="3">
    <location>
        <position position="9"/>
    </location>
</feature>
<feature type="modified residue" description="Phosphotyrosine; by ABL1" evidence="3">
    <location>
        <position position="14"/>
    </location>
</feature>
<feature type="modified residue" description="Phosphotyrosine" evidence="4">
    <location>
        <position position="25"/>
    </location>
</feature>
<feature type="lipid moiety-binding region" description="S-palmitoyl cysteine" evidence="1">
    <location>
        <position position="133"/>
    </location>
</feature>
<feature type="lipid moiety-binding region" description="S-palmitoyl cysteine" evidence="1">
    <location>
        <position position="143"/>
    </location>
</feature>
<feature type="lipid moiety-binding region" description="S-palmitoyl cysteine" evidence="1">
    <location>
        <position position="156"/>
    </location>
</feature>
<feature type="cross-link" description="Glycyl lysine isopeptide (Lys-Gly) (interchain with G-Cter in ubiquitin); alternate" evidence="4">
    <location>
        <position position="5"/>
    </location>
</feature>
<feature type="cross-link" description="Glycyl lysine isopeptide (Lys-Gly) (interchain with G-Cter in ubiquitin)" evidence="4">
    <location>
        <position position="26"/>
    </location>
</feature>
<feature type="cross-link" description="Glycyl lysine isopeptide (Lys-Gly) (interchain with G-Cter in ubiquitin)" evidence="4">
    <location>
        <position position="30"/>
    </location>
</feature>
<feature type="cross-link" description="Glycyl lysine isopeptide (Lys-Gly) (interchain with G-Cter in ubiquitin)" evidence="4">
    <location>
        <position position="39"/>
    </location>
</feature>
<feature type="cross-link" description="Glycyl lysine isopeptide (Lys-Gly) (interchain with G-Cter in ubiquitin)" evidence="4">
    <location>
        <position position="47"/>
    </location>
</feature>
<feature type="cross-link" description="Glycyl lysine isopeptide (Lys-Gly) (interchain with G-Cter in ubiquitin)" evidence="4">
    <location>
        <position position="57"/>
    </location>
</feature>
<proteinExistence type="inferred from homology"/>
<gene>
    <name type="primary">CAV1</name>
</gene>
<sequence length="178" mass="20608">MSGGKYVDSEGQLYTLPIREQGNIYKPNNKVMAEEMNEKQMYDAHTKEIDLVNRDPKHLNDDVVKIDFEDVIAEPEGTHSFDGIWKASFTTFTVTKYWFYRLLSSLVGIPVALIWGIYFAILSFLYIWAVVPCIKSFLIKIQCISRIYSICIHTFCDPLYEAIGKIFSNIRISMQKEI</sequence>
<reference key="1">
    <citation type="submission" date="2006-10" db="EMBL/GenBank/DDBJ databases">
        <title>NISC comparative sequencing initiative.</title>
        <authorList>
            <person name="Antonellis A."/>
            <person name="Ayele K."/>
            <person name="Benjamin B."/>
            <person name="Blakesley R.W."/>
            <person name="Boakye A."/>
            <person name="Bouffard G.G."/>
            <person name="Brinkley C."/>
            <person name="Brooks S."/>
            <person name="Chu G."/>
            <person name="Coleman H."/>
            <person name="Engle J."/>
            <person name="Gestole M."/>
            <person name="Greene A."/>
            <person name="Guan X."/>
            <person name="Gupta J."/>
            <person name="Haghighi P."/>
            <person name="Han J."/>
            <person name="Hansen N."/>
            <person name="Ho S.-L."/>
            <person name="Hu P."/>
            <person name="Hunter G."/>
            <person name="Hurle B."/>
            <person name="Idol J.R."/>
            <person name="Kwong P."/>
            <person name="Laric P."/>
            <person name="Larson S."/>
            <person name="Lee-Lin S.-Q."/>
            <person name="Legaspi R."/>
            <person name="Madden M."/>
            <person name="Maduro Q.L."/>
            <person name="Maduro V.B."/>
            <person name="Margulies E.H."/>
            <person name="Masiello C."/>
            <person name="Maskeri B."/>
            <person name="McDowell J."/>
            <person name="Mojidi H.A."/>
            <person name="Mullikin J.C."/>
            <person name="Oestreicher J.S."/>
            <person name="Park M."/>
            <person name="Portnoy M.E."/>
            <person name="Prasad A."/>
            <person name="Puri O."/>
            <person name="Reddix-Dugue N."/>
            <person name="Schandler K."/>
            <person name="Schueler M.G."/>
            <person name="Sison C."/>
            <person name="Stantripop S."/>
            <person name="Stephen E."/>
            <person name="Taye A."/>
            <person name="Thomas J.W."/>
            <person name="Thomas P.J."/>
            <person name="Tsipouri V."/>
            <person name="Ung L."/>
            <person name="Vogt J.L."/>
            <person name="Wetherby K.D."/>
            <person name="Young A."/>
            <person name="Green E.D."/>
        </authorList>
    </citation>
    <scope>NUCLEOTIDE SEQUENCE [LARGE SCALE GENOMIC DNA]</scope>
</reference>
<keyword id="KW-0007">Acetylation</keyword>
<keyword id="KW-1003">Cell membrane</keyword>
<keyword id="KW-0333">Golgi apparatus</keyword>
<keyword id="KW-1017">Isopeptide bond</keyword>
<keyword id="KW-0449">Lipoprotein</keyword>
<keyword id="KW-0472">Membrane</keyword>
<keyword id="KW-0564">Palmitate</keyword>
<keyword id="KW-0597">Phosphoprotein</keyword>
<keyword id="KW-0832">Ubl conjugation</keyword>
<evidence type="ECO:0000250" key="1"/>
<evidence type="ECO:0000250" key="2">
    <source>
        <dbReference type="UniProtKB" id="P41350"/>
    </source>
</evidence>
<evidence type="ECO:0000250" key="3">
    <source>
        <dbReference type="UniProtKB" id="P49817"/>
    </source>
</evidence>
<evidence type="ECO:0000250" key="4">
    <source>
        <dbReference type="UniProtKB" id="Q03135"/>
    </source>
</evidence>
<evidence type="ECO:0000250" key="5">
    <source>
        <dbReference type="UniProtKB" id="Q2IBA5"/>
    </source>
</evidence>
<evidence type="ECO:0000255" key="6"/>
<evidence type="ECO:0000305" key="7"/>
<comment type="function">
    <text evidence="3 4">May act as a scaffolding protein within caveolar membranes. Forms a stable heterooligomeric complex with CAV2 that targets to lipid rafts and drives caveolae formation. Mediates the recruitment of CAVIN proteins (CAVIN1/2/3/4) to the caveolae (By similarity). Interacts directly with G-protein alpha subunits and can functionally regulate their activity (By similarity). Involved in the costimulatory signal essential for T-cell receptor (TCR)-mediated T-cell activation. Its binding to DPP4 induces T-cell proliferation and NF-kappa-B activation in a T-cell receptor/CD3-dependent manner (By similarity). Recruits CTNNB1 to caveolar membranes and may regulate CTNNB1-mediated signaling through the Wnt pathway (By similarity). Negatively regulates TGFB1-mediated activation of SMAD2/3 by mediating the internalization of TGFBR1 from membrane rafts leading to its subsequent degradation (By similarity). Binds 20(S)-hydroxycholesterol (20(S)-OHC) (By similarity).</text>
</comment>
<comment type="subunit">
    <text evidence="2 3 4 5">Homooligomer. Interacts with GLIPR2. Interacts with NOSTRIN (By similarity). Interacts with SNAP25 and STX1A (By similarity). Interacts (via the N-terminus) with DPP4; the interaction is direct (By similarity). Interacts with CTNNB1, CDH1 and JUP. Interacts with PACSIN2; this interaction induces membrane tubulation (By similarity). Interacts with SLC7A9 (By similarity). Interacts with BMX and BTK. Interacts with TGFBR1. Interacts with CAVIN3 (via leucine-zipper domain) in a cholesterol-sensitive manner. Interacts with CAVIN1. Interacts with EHD2 in a cholesterol-dependent manner. Forms a ternary complex with UBXN6 and VCP; mediates CAV1 targeting to lysosomes for degradation. Interacts with ABCG1; this interaction regulates ABCG1-mediated cholesterol efflux (By similarity). Interacts with NEU3; this interaction enhances NEU3 sialidase activity within caveola. Interacts (via C-terminus) with SPRY1, SPRY2 (via C-terminus), SPRY3, and SPRY4 (By similarity). Interacts with IGFBP5; this interaction allows trafficking of IGFBP5 from the plasma membrane to the nucleus (By similarity).</text>
</comment>
<comment type="subcellular location">
    <subcellularLocation>
        <location evidence="1">Golgi apparatus membrane</location>
        <topology evidence="1">Peripheral membrane protein</topology>
    </subcellularLocation>
    <subcellularLocation>
        <location evidence="1">Cell membrane</location>
        <topology evidence="1">Peripheral membrane protein</topology>
    </subcellularLocation>
    <subcellularLocation>
        <location evidence="3">Membrane</location>
        <location evidence="3">Caveola</location>
        <topology evidence="1">Peripheral membrane protein</topology>
    </subcellularLocation>
    <subcellularLocation>
        <location evidence="4">Membrane raft</location>
    </subcellularLocation>
    <text evidence="1">Colocalized with DPP4 in membrane rafts. Potential hairpin-like structure in the membrane. Membrane protein of caveolae (By similarity).</text>
</comment>
<comment type="PTM">
    <text evidence="4">Phosphorylated at Tyr-14 by ABL1 in response to oxidative stress.</text>
</comment>
<comment type="PTM">
    <text evidence="4">Ubiquitinated. Undergo monoubiquitination and multi- and/or polyubiquitination. Monoubiquitination of N-terminal lysines promotes integration in a ternary complex with UBXN6 and VCP which promotes oligomeric CAV1 targeting to lysosomes for degradation. Ubiquitinated by ZNRF1; leading to degradation and modulation of the TLR4-mediated immune response.</text>
</comment>
<comment type="similarity">
    <text evidence="7">Belongs to the caveolin family.</text>
</comment>
<accession>Q00PJ9</accession>
<name>CAV1_ATEAB</name>
<dbReference type="EMBL" id="DP000003">
    <property type="protein sequence ID" value="AAY88978.1"/>
    <property type="molecule type" value="Genomic_DNA"/>
</dbReference>
<dbReference type="SMR" id="Q00PJ9"/>
<dbReference type="GO" id="GO:0005901">
    <property type="term" value="C:caveola"/>
    <property type="evidence" value="ECO:0000250"/>
    <property type="project" value="UniProtKB"/>
</dbReference>
<dbReference type="GO" id="GO:0005768">
    <property type="term" value="C:endosome"/>
    <property type="evidence" value="ECO:0000250"/>
    <property type="project" value="UniProtKB"/>
</dbReference>
<dbReference type="GO" id="GO:0005925">
    <property type="term" value="C:focal adhesion"/>
    <property type="evidence" value="ECO:0007669"/>
    <property type="project" value="TreeGrafter"/>
</dbReference>
<dbReference type="GO" id="GO:0000139">
    <property type="term" value="C:Golgi membrane"/>
    <property type="evidence" value="ECO:0007669"/>
    <property type="project" value="UniProtKB-SubCell"/>
</dbReference>
<dbReference type="GO" id="GO:0045121">
    <property type="term" value="C:membrane raft"/>
    <property type="evidence" value="ECO:0000250"/>
    <property type="project" value="UniProtKB"/>
</dbReference>
<dbReference type="GO" id="GO:0048471">
    <property type="term" value="C:perinuclear region of cytoplasm"/>
    <property type="evidence" value="ECO:0007669"/>
    <property type="project" value="TreeGrafter"/>
</dbReference>
<dbReference type="GO" id="GO:0042383">
    <property type="term" value="C:sarcolemma"/>
    <property type="evidence" value="ECO:0007669"/>
    <property type="project" value="TreeGrafter"/>
</dbReference>
<dbReference type="GO" id="GO:0060090">
    <property type="term" value="F:molecular adaptor activity"/>
    <property type="evidence" value="ECO:0007669"/>
    <property type="project" value="TreeGrafter"/>
</dbReference>
<dbReference type="GO" id="GO:0008142">
    <property type="term" value="F:oxysterol binding"/>
    <property type="evidence" value="ECO:0000250"/>
    <property type="project" value="UniProtKB"/>
</dbReference>
<dbReference type="GO" id="GO:0019901">
    <property type="term" value="F:protein kinase binding"/>
    <property type="evidence" value="ECO:0007669"/>
    <property type="project" value="TreeGrafter"/>
</dbReference>
<dbReference type="GO" id="GO:0044325">
    <property type="term" value="F:transmembrane transporter binding"/>
    <property type="evidence" value="ECO:0007669"/>
    <property type="project" value="TreeGrafter"/>
</dbReference>
<dbReference type="GO" id="GO:0070836">
    <property type="term" value="P:caveola assembly"/>
    <property type="evidence" value="ECO:0007669"/>
    <property type="project" value="InterPro"/>
</dbReference>
<dbReference type="GO" id="GO:0030154">
    <property type="term" value="P:cell differentiation"/>
    <property type="evidence" value="ECO:0007669"/>
    <property type="project" value="TreeGrafter"/>
</dbReference>
<dbReference type="GO" id="GO:0001937">
    <property type="term" value="P:negative regulation of endothelial cell proliferation"/>
    <property type="evidence" value="ECO:0007669"/>
    <property type="project" value="TreeGrafter"/>
</dbReference>
<dbReference type="GO" id="GO:0031623">
    <property type="term" value="P:receptor internalization"/>
    <property type="evidence" value="ECO:0000250"/>
    <property type="project" value="UniProtKB"/>
</dbReference>
<dbReference type="GO" id="GO:0051480">
    <property type="term" value="P:regulation of cytosolic calcium ion concentration"/>
    <property type="evidence" value="ECO:0007669"/>
    <property type="project" value="TreeGrafter"/>
</dbReference>
<dbReference type="GO" id="GO:0031295">
    <property type="term" value="P:T cell costimulation"/>
    <property type="evidence" value="ECO:0000250"/>
    <property type="project" value="UniProtKB"/>
</dbReference>
<dbReference type="InterPro" id="IPR001612">
    <property type="entry name" value="Caveolin"/>
</dbReference>
<dbReference type="InterPro" id="IPR018361">
    <property type="entry name" value="Caveolin_CS"/>
</dbReference>
<dbReference type="PANTHER" id="PTHR10844">
    <property type="entry name" value="CAVEOLIN"/>
    <property type="match status" value="1"/>
</dbReference>
<dbReference type="PANTHER" id="PTHR10844:SF18">
    <property type="entry name" value="CAVEOLIN-1"/>
    <property type="match status" value="1"/>
</dbReference>
<dbReference type="Pfam" id="PF01146">
    <property type="entry name" value="Caveolin"/>
    <property type="match status" value="1"/>
</dbReference>
<dbReference type="PROSITE" id="PS01210">
    <property type="entry name" value="CAVEOLIN"/>
    <property type="match status" value="1"/>
</dbReference>